<proteinExistence type="inferred from homology"/>
<sequence>MSGWQRIYYKLLNLPLQVLVKSKSIPAEPAQELGLDTSRPVMYVLPYNSKADLLTLRAQCLAHDLPDPLEPLEIDGALLPRYVFIHGGPRVFTYYTPKEESIKLFHDYLDLHRNHPDLDVQMVPVSVMFGRSPGREKGEVNPPLRMLNGIQKFFAVSWLGRDSFVRFSPSVSLRRMADEHGTDKIIAQKLARVARMHFARQRLAAVGPRLPARQDLFNKLLASKAIARAVEDEARSKKISHEKAQQNAIALMEEIAANFSYEMIRLTDRILGFTWNRLYQGINVHNAERVRQLAHDGHEIVYVPCHRSHMDYLLLSYVLYHQGLVPPHIAAGINLNFWPAGPIFRRLGAFFIRRTFKGNKLYSTVFREYLGELFSRGYSVEYFVEGGRSRTGRLLDPKTGTLSMTIQAMLRGGTRPITLVPIYIGYEHVMEVGTYAKELRGATKEKESLPQMVRGLSKLRNLGQGYVNFGEPLPLMTYLNQHVPDWREAIDPIEAVRPSWLTPTVNSIAADLMVRINNAGAANAMNLCCTALLASRQRSLTREQLTQQLECYLALLRNVPYSPDATAPSASASELIDHALQMNKFEVEKDTIGDIIILPREQAVLMTYYRNNIAHMLVMPSLLAALVTQHRHLSRAEVLRHVETLYPFLKAELFLRWEKAELAGVVDALIAEMLRQELIVVDGDVMSLNPSHSRSLQLLAAGARETLQRYAITFWLLSANPAINRSSLEKESRTVAQRLSVLHGINAPEFFDKAVFSTLVLTLRDEGYISDTGDAEPEETLKVYRMLADLITSDVRLTIESVTQDDA</sequence>
<feature type="chain" id="PRO_1000049437" description="Glycerol-3-phosphate acyltransferase">
    <location>
        <begin position="1"/>
        <end position="807"/>
    </location>
</feature>
<feature type="short sequence motif" description="HXXXXD motif">
    <location>
        <begin position="305"/>
        <end position="310"/>
    </location>
</feature>
<protein>
    <recommendedName>
        <fullName evidence="1">Glycerol-3-phosphate acyltransferase</fullName>
        <shortName evidence="1">GPAT</shortName>
        <ecNumber evidence="1">2.3.1.15</ecNumber>
    </recommendedName>
</protein>
<accession>A6TGV0</accession>
<dbReference type="EC" id="2.3.1.15" evidence="1"/>
<dbReference type="EMBL" id="CP000647">
    <property type="protein sequence ID" value="ABR79784.1"/>
    <property type="molecule type" value="Genomic_DNA"/>
</dbReference>
<dbReference type="RefSeq" id="WP_004178269.1">
    <property type="nucleotide sequence ID" value="NC_009648.1"/>
</dbReference>
<dbReference type="SMR" id="A6TGV0"/>
<dbReference type="STRING" id="272620.KPN_04429"/>
<dbReference type="jPOST" id="A6TGV0"/>
<dbReference type="PaxDb" id="272620-KPN_04429"/>
<dbReference type="EnsemblBacteria" id="ABR79784">
    <property type="protein sequence ID" value="ABR79784"/>
    <property type="gene ID" value="KPN_04429"/>
</dbReference>
<dbReference type="KEGG" id="kpn:KPN_04429"/>
<dbReference type="HOGENOM" id="CLU_015407_0_0_6"/>
<dbReference type="UniPathway" id="UPA00557">
    <property type="reaction ID" value="UER00612"/>
</dbReference>
<dbReference type="Proteomes" id="UP000000265">
    <property type="component" value="Chromosome"/>
</dbReference>
<dbReference type="GO" id="GO:0005886">
    <property type="term" value="C:plasma membrane"/>
    <property type="evidence" value="ECO:0007669"/>
    <property type="project" value="UniProtKB-SubCell"/>
</dbReference>
<dbReference type="GO" id="GO:0004366">
    <property type="term" value="F:glycerol-3-phosphate O-acyltransferase activity"/>
    <property type="evidence" value="ECO:0007669"/>
    <property type="project" value="UniProtKB-UniRule"/>
</dbReference>
<dbReference type="GO" id="GO:0016024">
    <property type="term" value="P:CDP-diacylglycerol biosynthetic process"/>
    <property type="evidence" value="ECO:0007669"/>
    <property type="project" value="UniProtKB-UniRule"/>
</dbReference>
<dbReference type="GO" id="GO:0006631">
    <property type="term" value="P:fatty acid metabolic process"/>
    <property type="evidence" value="ECO:0007669"/>
    <property type="project" value="TreeGrafter"/>
</dbReference>
<dbReference type="CDD" id="cd07993">
    <property type="entry name" value="LPLAT_DHAPAT-like"/>
    <property type="match status" value="1"/>
</dbReference>
<dbReference type="HAMAP" id="MF_00393">
    <property type="entry name" value="Glyc3P_acyltrans"/>
    <property type="match status" value="1"/>
</dbReference>
<dbReference type="InterPro" id="IPR022284">
    <property type="entry name" value="GPAT/DHAPAT"/>
</dbReference>
<dbReference type="InterPro" id="IPR045520">
    <property type="entry name" value="GPAT/DHAPAT_C"/>
</dbReference>
<dbReference type="InterPro" id="IPR041728">
    <property type="entry name" value="GPAT/DHAPAT_LPLAT"/>
</dbReference>
<dbReference type="InterPro" id="IPR028354">
    <property type="entry name" value="GPAT_PlsB"/>
</dbReference>
<dbReference type="InterPro" id="IPR002123">
    <property type="entry name" value="Plipid/glycerol_acylTrfase"/>
</dbReference>
<dbReference type="NCBIfam" id="TIGR03703">
    <property type="entry name" value="plsB"/>
    <property type="match status" value="1"/>
</dbReference>
<dbReference type="NCBIfam" id="NF003441">
    <property type="entry name" value="PRK04974.1"/>
    <property type="match status" value="1"/>
</dbReference>
<dbReference type="PANTHER" id="PTHR12563:SF17">
    <property type="entry name" value="DIHYDROXYACETONE PHOSPHATE ACYLTRANSFERASE"/>
    <property type="match status" value="1"/>
</dbReference>
<dbReference type="PANTHER" id="PTHR12563">
    <property type="entry name" value="GLYCEROL-3-PHOSPHATE ACYLTRANSFERASE"/>
    <property type="match status" value="1"/>
</dbReference>
<dbReference type="Pfam" id="PF01553">
    <property type="entry name" value="Acyltransferase"/>
    <property type="match status" value="1"/>
</dbReference>
<dbReference type="Pfam" id="PF19277">
    <property type="entry name" value="GPAT_C"/>
    <property type="match status" value="1"/>
</dbReference>
<dbReference type="PIRSF" id="PIRSF500064">
    <property type="entry name" value="GPAT"/>
    <property type="match status" value="1"/>
</dbReference>
<dbReference type="PIRSF" id="PIRSF000437">
    <property type="entry name" value="GPAT_DHAPAT"/>
    <property type="match status" value="1"/>
</dbReference>
<dbReference type="SMART" id="SM00563">
    <property type="entry name" value="PlsC"/>
    <property type="match status" value="1"/>
</dbReference>
<dbReference type="SUPFAM" id="SSF69593">
    <property type="entry name" value="Glycerol-3-phosphate (1)-acyltransferase"/>
    <property type="match status" value="1"/>
</dbReference>
<name>PLSB_KLEP7</name>
<comment type="catalytic activity">
    <reaction evidence="1">
        <text>sn-glycerol 3-phosphate + an acyl-CoA = a 1-acyl-sn-glycero-3-phosphate + CoA</text>
        <dbReference type="Rhea" id="RHEA:15325"/>
        <dbReference type="ChEBI" id="CHEBI:57287"/>
        <dbReference type="ChEBI" id="CHEBI:57597"/>
        <dbReference type="ChEBI" id="CHEBI:57970"/>
        <dbReference type="ChEBI" id="CHEBI:58342"/>
        <dbReference type="EC" id="2.3.1.15"/>
    </reaction>
</comment>
<comment type="pathway">
    <text evidence="1">Phospholipid metabolism; CDP-diacylglycerol biosynthesis; CDP-diacylglycerol from sn-glycerol 3-phosphate: step 1/3.</text>
</comment>
<comment type="subcellular location">
    <subcellularLocation>
        <location evidence="1">Cell inner membrane</location>
        <topology evidence="1">Peripheral membrane protein</topology>
        <orientation evidence="1">Cytoplasmic side</orientation>
    </subcellularLocation>
</comment>
<comment type="domain">
    <text evidence="1">The HXXXXD motif is essential for acyltransferase activity and may constitute the binding site for the phosphate moiety of the glycerol-3-phosphate.</text>
</comment>
<comment type="similarity">
    <text evidence="1">Belongs to the GPAT/DAPAT family.</text>
</comment>
<evidence type="ECO:0000255" key="1">
    <source>
        <dbReference type="HAMAP-Rule" id="MF_00393"/>
    </source>
</evidence>
<gene>
    <name evidence="1" type="primary">plsB</name>
    <name type="ordered locus">KPN78578_43600</name>
    <name type="ORF">KPN_04429</name>
</gene>
<keyword id="KW-0012">Acyltransferase</keyword>
<keyword id="KW-0997">Cell inner membrane</keyword>
<keyword id="KW-1003">Cell membrane</keyword>
<keyword id="KW-0444">Lipid biosynthesis</keyword>
<keyword id="KW-0443">Lipid metabolism</keyword>
<keyword id="KW-0472">Membrane</keyword>
<keyword id="KW-0594">Phospholipid biosynthesis</keyword>
<keyword id="KW-1208">Phospholipid metabolism</keyword>
<keyword id="KW-0808">Transferase</keyword>
<reference key="1">
    <citation type="submission" date="2006-09" db="EMBL/GenBank/DDBJ databases">
        <authorList>
            <consortium name="The Klebsiella pneumonia Genome Sequencing Project"/>
            <person name="McClelland M."/>
            <person name="Sanderson E.K."/>
            <person name="Spieth J."/>
            <person name="Clifton W.S."/>
            <person name="Latreille P."/>
            <person name="Sabo A."/>
            <person name="Pepin K."/>
            <person name="Bhonagiri V."/>
            <person name="Porwollik S."/>
            <person name="Ali J."/>
            <person name="Wilson R.K."/>
        </authorList>
    </citation>
    <scope>NUCLEOTIDE SEQUENCE [LARGE SCALE GENOMIC DNA]</scope>
    <source>
        <strain>ATCC 700721 / MGH 78578</strain>
    </source>
</reference>
<organism>
    <name type="scientific">Klebsiella pneumoniae subsp. pneumoniae (strain ATCC 700721 / MGH 78578)</name>
    <dbReference type="NCBI Taxonomy" id="272620"/>
    <lineage>
        <taxon>Bacteria</taxon>
        <taxon>Pseudomonadati</taxon>
        <taxon>Pseudomonadota</taxon>
        <taxon>Gammaproteobacteria</taxon>
        <taxon>Enterobacterales</taxon>
        <taxon>Enterobacteriaceae</taxon>
        <taxon>Klebsiella/Raoultella group</taxon>
        <taxon>Klebsiella</taxon>
        <taxon>Klebsiella pneumoniae complex</taxon>
    </lineage>
</organism>